<keyword id="KW-0004">4Fe-4S</keyword>
<keyword id="KW-0235">DNA replication</keyword>
<keyword id="KW-0238">DNA-binding</keyword>
<keyword id="KW-0408">Iron</keyword>
<keyword id="KW-0411">Iron-sulfur</keyword>
<keyword id="KW-0479">Metal-binding</keyword>
<keyword id="KW-0639">Primosome</keyword>
<keyword id="KW-1185">Reference proteome</keyword>
<gene>
    <name type="ORF">5F3.150</name>
    <name type="ORF">NCU04646</name>
</gene>
<comment type="function">
    <text evidence="1">DNA primase is the polymerase that synthesizes small RNA primers for the Okazaki fragments made during discontinuous DNA replication.</text>
</comment>
<comment type="cofactor">
    <cofactor evidence="1">
        <name>[4Fe-4S] cluster</name>
        <dbReference type="ChEBI" id="CHEBI:49883"/>
    </cofactor>
    <text evidence="1">Binds 1 [4Fe-4S] cluster.</text>
</comment>
<comment type="subunit">
    <text evidence="1">Heterodimer of a small subunit and a large subunit.</text>
</comment>
<comment type="similarity">
    <text evidence="2">Belongs to the eukaryotic-type primase large subunit family.</text>
</comment>
<protein>
    <recommendedName>
        <fullName>Probable DNA primase large subunit</fullName>
    </recommendedName>
</protein>
<evidence type="ECO:0000250" key="1"/>
<evidence type="ECO:0000305" key="2"/>
<dbReference type="EMBL" id="AL807371">
    <property type="protein sequence ID" value="CAD37016.1"/>
    <property type="molecule type" value="Genomic_DNA"/>
</dbReference>
<dbReference type="EMBL" id="CM002240">
    <property type="protein sequence ID" value="EAA29953.1"/>
    <property type="molecule type" value="Genomic_DNA"/>
</dbReference>
<dbReference type="RefSeq" id="XP_959189.1">
    <property type="nucleotide sequence ID" value="XM_954096.2"/>
</dbReference>
<dbReference type="SMR" id="Q8NIZ4"/>
<dbReference type="FunCoup" id="Q8NIZ4">
    <property type="interactions" value="886"/>
</dbReference>
<dbReference type="STRING" id="367110.Q8NIZ4"/>
<dbReference type="PaxDb" id="5141-EFNCRP00000005897"/>
<dbReference type="EnsemblFungi" id="EAA29953">
    <property type="protein sequence ID" value="EAA29953"/>
    <property type="gene ID" value="NCU04646"/>
</dbReference>
<dbReference type="GeneID" id="3875327"/>
<dbReference type="KEGG" id="ncr:NCU04646"/>
<dbReference type="VEuPathDB" id="FungiDB:NCU04646"/>
<dbReference type="HOGENOM" id="CLU_026253_1_0_1"/>
<dbReference type="InParanoid" id="Q8NIZ4"/>
<dbReference type="OMA" id="RINYKPW"/>
<dbReference type="OrthoDB" id="421393at2759"/>
<dbReference type="Proteomes" id="UP000001805">
    <property type="component" value="Chromosome 2, Linkage Group V"/>
</dbReference>
<dbReference type="GO" id="GO:0005658">
    <property type="term" value="C:alpha DNA polymerase:primase complex"/>
    <property type="evidence" value="ECO:0000318"/>
    <property type="project" value="GO_Central"/>
</dbReference>
<dbReference type="GO" id="GO:0005635">
    <property type="term" value="C:nuclear envelope"/>
    <property type="evidence" value="ECO:0007669"/>
    <property type="project" value="EnsemblFungi"/>
</dbReference>
<dbReference type="GO" id="GO:0051539">
    <property type="term" value="F:4 iron, 4 sulfur cluster binding"/>
    <property type="evidence" value="ECO:0007669"/>
    <property type="project" value="UniProtKB-KW"/>
</dbReference>
<dbReference type="GO" id="GO:0003899">
    <property type="term" value="F:DNA-directed RNA polymerase activity"/>
    <property type="evidence" value="ECO:0007669"/>
    <property type="project" value="EnsemblFungi"/>
</dbReference>
<dbReference type="GO" id="GO:0046872">
    <property type="term" value="F:metal ion binding"/>
    <property type="evidence" value="ECO:0007669"/>
    <property type="project" value="UniProtKB-KW"/>
</dbReference>
<dbReference type="GO" id="GO:0003697">
    <property type="term" value="F:single-stranded DNA binding"/>
    <property type="evidence" value="ECO:0007669"/>
    <property type="project" value="EnsemblFungi"/>
</dbReference>
<dbReference type="GO" id="GO:0006270">
    <property type="term" value="P:DNA replication initiation"/>
    <property type="evidence" value="ECO:0000318"/>
    <property type="project" value="GO_Central"/>
</dbReference>
<dbReference type="GO" id="GO:0006269">
    <property type="term" value="P:DNA replication, synthesis of primer"/>
    <property type="evidence" value="ECO:0000318"/>
    <property type="project" value="GO_Central"/>
</dbReference>
<dbReference type="GO" id="GO:0006302">
    <property type="term" value="P:double-strand break repair"/>
    <property type="evidence" value="ECO:0007669"/>
    <property type="project" value="EnsemblFungi"/>
</dbReference>
<dbReference type="CDD" id="cd07322">
    <property type="entry name" value="PriL_PriS_Eukaryotic"/>
    <property type="match status" value="1"/>
</dbReference>
<dbReference type="FunFam" id="1.20.930.80:FF:000003">
    <property type="entry name" value="DNA primase large subunit"/>
    <property type="match status" value="1"/>
</dbReference>
<dbReference type="Gene3D" id="1.20.930.80">
    <property type="match status" value="1"/>
</dbReference>
<dbReference type="InterPro" id="IPR016558">
    <property type="entry name" value="DNA_primase_lsu_euk"/>
</dbReference>
<dbReference type="InterPro" id="IPR007238">
    <property type="entry name" value="DNA_primase_lsu_euk/arc"/>
</dbReference>
<dbReference type="PANTHER" id="PTHR10537">
    <property type="entry name" value="DNA PRIMASE LARGE SUBUNIT"/>
    <property type="match status" value="1"/>
</dbReference>
<dbReference type="PANTHER" id="PTHR10537:SF3">
    <property type="entry name" value="DNA PRIMASE LARGE SUBUNIT"/>
    <property type="match status" value="1"/>
</dbReference>
<dbReference type="Pfam" id="PF04104">
    <property type="entry name" value="DNA_primase_lrg"/>
    <property type="match status" value="1"/>
</dbReference>
<dbReference type="PIRSF" id="PIRSF009449">
    <property type="entry name" value="DNA_primase_large_subunit"/>
    <property type="match status" value="1"/>
</dbReference>
<name>PRI2_NEUCR</name>
<accession>Q8NIZ4</accession>
<accession>Q7S3B8</accession>
<reference key="1">
    <citation type="journal article" date="2003" name="Nucleic Acids Res.">
        <title>What's in the genome of a filamentous fungus? Analysis of the Neurospora genome sequence.</title>
        <authorList>
            <person name="Mannhaupt G."/>
            <person name="Montrone C."/>
            <person name="Haase D."/>
            <person name="Mewes H.-W."/>
            <person name="Aign V."/>
            <person name="Hoheisel J.D."/>
            <person name="Fartmann B."/>
            <person name="Nyakatura G."/>
            <person name="Kempken F."/>
            <person name="Maier J."/>
            <person name="Schulte U."/>
        </authorList>
    </citation>
    <scope>NUCLEOTIDE SEQUENCE [LARGE SCALE GENOMIC DNA]</scope>
    <source>
        <strain>ATCC 24698 / 74-OR23-1A / CBS 708.71 / DSM 1257 / FGSC 987</strain>
    </source>
</reference>
<reference key="2">
    <citation type="journal article" date="2003" name="Nature">
        <title>The genome sequence of the filamentous fungus Neurospora crassa.</title>
        <authorList>
            <person name="Galagan J.E."/>
            <person name="Calvo S.E."/>
            <person name="Borkovich K.A."/>
            <person name="Selker E.U."/>
            <person name="Read N.D."/>
            <person name="Jaffe D.B."/>
            <person name="FitzHugh W."/>
            <person name="Ma L.-J."/>
            <person name="Smirnov S."/>
            <person name="Purcell S."/>
            <person name="Rehman B."/>
            <person name="Elkins T."/>
            <person name="Engels R."/>
            <person name="Wang S."/>
            <person name="Nielsen C.B."/>
            <person name="Butler J."/>
            <person name="Endrizzi M."/>
            <person name="Qui D."/>
            <person name="Ianakiev P."/>
            <person name="Bell-Pedersen D."/>
            <person name="Nelson M.A."/>
            <person name="Werner-Washburne M."/>
            <person name="Selitrennikoff C.P."/>
            <person name="Kinsey J.A."/>
            <person name="Braun E.L."/>
            <person name="Zelter A."/>
            <person name="Schulte U."/>
            <person name="Kothe G.O."/>
            <person name="Jedd G."/>
            <person name="Mewes H.-W."/>
            <person name="Staben C."/>
            <person name="Marcotte E."/>
            <person name="Greenberg D."/>
            <person name="Roy A."/>
            <person name="Foley K."/>
            <person name="Naylor J."/>
            <person name="Stange-Thomann N."/>
            <person name="Barrett R."/>
            <person name="Gnerre S."/>
            <person name="Kamal M."/>
            <person name="Kamvysselis M."/>
            <person name="Mauceli E.W."/>
            <person name="Bielke C."/>
            <person name="Rudd S."/>
            <person name="Frishman D."/>
            <person name="Krystofova S."/>
            <person name="Rasmussen C."/>
            <person name="Metzenberg R.L."/>
            <person name="Perkins D.D."/>
            <person name="Kroken S."/>
            <person name="Cogoni C."/>
            <person name="Macino G."/>
            <person name="Catcheside D.E.A."/>
            <person name="Li W."/>
            <person name="Pratt R.J."/>
            <person name="Osmani S.A."/>
            <person name="DeSouza C.P.C."/>
            <person name="Glass N.L."/>
            <person name="Orbach M.J."/>
            <person name="Berglund J.A."/>
            <person name="Voelker R."/>
            <person name="Yarden O."/>
            <person name="Plamann M."/>
            <person name="Seiler S."/>
            <person name="Dunlap J.C."/>
            <person name="Radford A."/>
            <person name="Aramayo R."/>
            <person name="Natvig D.O."/>
            <person name="Alex L.A."/>
            <person name="Mannhaupt G."/>
            <person name="Ebbole D.J."/>
            <person name="Freitag M."/>
            <person name="Paulsen I."/>
            <person name="Sachs M.S."/>
            <person name="Lander E.S."/>
            <person name="Nusbaum C."/>
            <person name="Birren B.W."/>
        </authorList>
    </citation>
    <scope>NUCLEOTIDE SEQUENCE [LARGE SCALE GENOMIC DNA]</scope>
    <source>
        <strain>ATCC 24698 / 74-OR23-1A / CBS 708.71 / DSM 1257 / FGSC 987</strain>
    </source>
</reference>
<feature type="chain" id="PRO_0000046774" description="Probable DNA primase large subunit">
    <location>
        <begin position="1"/>
        <end position="513"/>
    </location>
</feature>
<feature type="binding site" evidence="1">
    <location>
        <position position="315"/>
    </location>
    <ligand>
        <name>[4Fe-4S] cluster</name>
        <dbReference type="ChEBI" id="CHEBI:49883"/>
    </ligand>
</feature>
<feature type="binding site" evidence="1">
    <location>
        <position position="398"/>
    </location>
    <ligand>
        <name>[4Fe-4S] cluster</name>
        <dbReference type="ChEBI" id="CHEBI:49883"/>
    </ligand>
</feature>
<feature type="binding site" evidence="1">
    <location>
        <position position="415"/>
    </location>
    <ligand>
        <name>[4Fe-4S] cluster</name>
        <dbReference type="ChEBI" id="CHEBI:49883"/>
    </ligand>
</feature>
<feature type="binding site" evidence="1">
    <location>
        <position position="457"/>
    </location>
    <ligand>
        <name>[4Fe-4S] cluster</name>
        <dbReference type="ChEBI" id="CHEBI:49883"/>
    </ligand>
</feature>
<sequence>MLRSNVSRIDPKRRNVLDHRKKQFAEAAYKDTDYPHRLNFYSTPPTADITIEQFEQWAIDRLRILAELEACSFRNKTPAETASHMKPLLDKYLPLDTNSSSSSQLFAQRQKDHYSHFILRLAFASTEDLRRRFTRVETMLFRMRLNADDGRERAAFINSLNLDWETVSDEEKRELAAELAATASFGGYKKGQQQQQQYEEDQQTWCKVSWLRVPELVEQRRVFLRQGYAYVPAREQQAMVVSEFSSRLERQLELTARALPRLDEDDRLTPILAHLSKNFITPDASYVGTSSAISSADISARNIDTLVNNHHFPACMSHLHRTLRRDAHLKHYGRLQYTLFLKGIGLNLEECLLFWRQSFNKITDDTFNKEYRYNVRHTYGDVGGDSNRRGGGYSPYSCQKILTEHPPGPGEAHGCPYRHFNMENLQTLLQQGMGVTDRGVLNGVKEDKEKQKFHMACNRVFEHLHKEELKKAKDEGIMTAAQLETIVHPNEYFKRSYLLKNMGKMQGDVKMEG</sequence>
<proteinExistence type="inferred from homology"/>
<organism>
    <name type="scientific">Neurospora crassa (strain ATCC 24698 / 74-OR23-1A / CBS 708.71 / DSM 1257 / FGSC 987)</name>
    <dbReference type="NCBI Taxonomy" id="367110"/>
    <lineage>
        <taxon>Eukaryota</taxon>
        <taxon>Fungi</taxon>
        <taxon>Dikarya</taxon>
        <taxon>Ascomycota</taxon>
        <taxon>Pezizomycotina</taxon>
        <taxon>Sordariomycetes</taxon>
        <taxon>Sordariomycetidae</taxon>
        <taxon>Sordariales</taxon>
        <taxon>Sordariaceae</taxon>
        <taxon>Neurospora</taxon>
    </lineage>
</organism>